<keyword id="KW-1185">Reference proteome</keyword>
<dbReference type="EMBL" id="CU928145">
    <property type="protein sequence ID" value="CAU98311.1"/>
    <property type="molecule type" value="Genomic_DNA"/>
</dbReference>
<dbReference type="RefSeq" id="WP_001135667.1">
    <property type="nucleotide sequence ID" value="NC_011748.1"/>
</dbReference>
<dbReference type="SMR" id="B7LAL1"/>
<dbReference type="KEGG" id="eck:EC55989_2441"/>
<dbReference type="HOGENOM" id="CLU_175457_0_0_6"/>
<dbReference type="Proteomes" id="UP000000746">
    <property type="component" value="Chromosome"/>
</dbReference>
<dbReference type="FunFam" id="1.10.3390.10:FF:000001">
    <property type="entry name" value="UPF0352 protein YejL"/>
    <property type="match status" value="1"/>
</dbReference>
<dbReference type="Gene3D" id="1.10.3390.10">
    <property type="entry name" value="YejL-like"/>
    <property type="match status" value="1"/>
</dbReference>
<dbReference type="HAMAP" id="MF_00816">
    <property type="entry name" value="UPF0352"/>
    <property type="match status" value="1"/>
</dbReference>
<dbReference type="InterPro" id="IPR009857">
    <property type="entry name" value="UPF0352"/>
</dbReference>
<dbReference type="InterPro" id="IPR023202">
    <property type="entry name" value="YejL_sf"/>
</dbReference>
<dbReference type="NCBIfam" id="NF010242">
    <property type="entry name" value="PRK13689.1"/>
    <property type="match status" value="1"/>
</dbReference>
<dbReference type="Pfam" id="PF07208">
    <property type="entry name" value="DUF1414"/>
    <property type="match status" value="1"/>
</dbReference>
<dbReference type="PIRSF" id="PIRSF006188">
    <property type="entry name" value="UCP006188"/>
    <property type="match status" value="1"/>
</dbReference>
<dbReference type="SUPFAM" id="SSF158651">
    <property type="entry name" value="YejL-like"/>
    <property type="match status" value="1"/>
</dbReference>
<accession>B7LAL1</accession>
<comment type="similarity">
    <text evidence="1">Belongs to the UPF0352 family.</text>
</comment>
<name>YEJL_ECO55</name>
<feature type="chain" id="PRO_1000148649" description="UPF0352 protein YejL">
    <location>
        <begin position="1"/>
        <end position="75"/>
    </location>
</feature>
<gene>
    <name evidence="1" type="primary">yejL</name>
    <name type="ordered locus">EC55989_2441</name>
</gene>
<sequence>MPQISRYSDEQVEQLLAELLNVLEKHKAPTDLSLMVLGNMVTNLINTSIAPAQRQAIANSFARALQSSINEDKAH</sequence>
<protein>
    <recommendedName>
        <fullName evidence="1">UPF0352 protein YejL</fullName>
    </recommendedName>
</protein>
<reference key="1">
    <citation type="journal article" date="2009" name="PLoS Genet.">
        <title>Organised genome dynamics in the Escherichia coli species results in highly diverse adaptive paths.</title>
        <authorList>
            <person name="Touchon M."/>
            <person name="Hoede C."/>
            <person name="Tenaillon O."/>
            <person name="Barbe V."/>
            <person name="Baeriswyl S."/>
            <person name="Bidet P."/>
            <person name="Bingen E."/>
            <person name="Bonacorsi S."/>
            <person name="Bouchier C."/>
            <person name="Bouvet O."/>
            <person name="Calteau A."/>
            <person name="Chiapello H."/>
            <person name="Clermont O."/>
            <person name="Cruveiller S."/>
            <person name="Danchin A."/>
            <person name="Diard M."/>
            <person name="Dossat C."/>
            <person name="Karoui M.E."/>
            <person name="Frapy E."/>
            <person name="Garry L."/>
            <person name="Ghigo J.M."/>
            <person name="Gilles A.M."/>
            <person name="Johnson J."/>
            <person name="Le Bouguenec C."/>
            <person name="Lescat M."/>
            <person name="Mangenot S."/>
            <person name="Martinez-Jehanne V."/>
            <person name="Matic I."/>
            <person name="Nassif X."/>
            <person name="Oztas S."/>
            <person name="Petit M.A."/>
            <person name="Pichon C."/>
            <person name="Rouy Z."/>
            <person name="Ruf C.S."/>
            <person name="Schneider D."/>
            <person name="Tourret J."/>
            <person name="Vacherie B."/>
            <person name="Vallenet D."/>
            <person name="Medigue C."/>
            <person name="Rocha E.P.C."/>
            <person name="Denamur E."/>
        </authorList>
    </citation>
    <scope>NUCLEOTIDE SEQUENCE [LARGE SCALE GENOMIC DNA]</scope>
    <source>
        <strain>55989 / EAEC</strain>
    </source>
</reference>
<organism>
    <name type="scientific">Escherichia coli (strain 55989 / EAEC)</name>
    <dbReference type="NCBI Taxonomy" id="585055"/>
    <lineage>
        <taxon>Bacteria</taxon>
        <taxon>Pseudomonadati</taxon>
        <taxon>Pseudomonadota</taxon>
        <taxon>Gammaproteobacteria</taxon>
        <taxon>Enterobacterales</taxon>
        <taxon>Enterobacteriaceae</taxon>
        <taxon>Escherichia</taxon>
    </lineage>
</organism>
<evidence type="ECO:0000255" key="1">
    <source>
        <dbReference type="HAMAP-Rule" id="MF_00816"/>
    </source>
</evidence>
<proteinExistence type="inferred from homology"/>